<accession>Q751D8</accession>
<comment type="function">
    <text evidence="2">Diphosphomevalonate decarboxylase; part of the second module of ergosterol biosynthesis pathway that includes the middle steps of the pathway (By similarity). The second module is carried out in the vacuole and involves the formation of farnesyl diphosphate, which is also an important intermediate in the biosynthesis of ubiquinone, dolichol, heme and prenylated proteins (By similarity). Activity by the mevalonate kinase ERG12 first converts mevalonate into 5-phosphomevalonate. 5-phosphomevalonate is then further converted to 5-diphosphomevalonate by the phosphomevalonate kinase ERG8 (By similarity). The diphosphomevalonate decarboxylase MVD1/ERG19 then produces isopentenyl diphosphate (By similarity). The isopentenyl-diphosphate delta-isomerase IDI1 then catalyzes the 1,3-allylic rearrangement of the homoallylic substrate isopentenyl (IPP) to its highly electrophilic allylic isomer, dimethylallyl diphosphate (DMAPP) (By similarity). Finally the farnesyl diphosphate synthase ERG20 catalyzes the sequential condensation of isopentenyl pyrophosphate with dimethylallyl pyrophosphate, and then with the resultant geranylpyrophosphate to the ultimate product farnesyl pyrophosphate (By similarity).</text>
</comment>
<comment type="catalytic activity">
    <reaction evidence="2">
        <text>(R)-5-diphosphomevalonate + ATP = isopentenyl diphosphate + ADP + phosphate + CO2</text>
        <dbReference type="Rhea" id="RHEA:23732"/>
        <dbReference type="ChEBI" id="CHEBI:16526"/>
        <dbReference type="ChEBI" id="CHEBI:30616"/>
        <dbReference type="ChEBI" id="CHEBI:43474"/>
        <dbReference type="ChEBI" id="CHEBI:57557"/>
        <dbReference type="ChEBI" id="CHEBI:128769"/>
        <dbReference type="ChEBI" id="CHEBI:456216"/>
        <dbReference type="EC" id="4.1.1.33"/>
    </reaction>
    <physiologicalReaction direction="left-to-right" evidence="2">
        <dbReference type="Rhea" id="RHEA:23733"/>
    </physiologicalReaction>
</comment>
<comment type="pathway">
    <text evidence="2">Isoprenoid biosynthesis; isopentenyl diphosphate biosynthesis via mevalonate pathway; isopentenyl diphosphate from (R)-mevalonate: step 3/3.</text>
</comment>
<comment type="subunit">
    <text evidence="2">Homodimer.</text>
</comment>
<comment type="similarity">
    <text evidence="4">Belongs to the diphosphomevalonate decarboxylase family.</text>
</comment>
<organism>
    <name type="scientific">Eremothecium gossypii (strain ATCC 10895 / CBS 109.51 / FGSC 9923 / NRRL Y-1056)</name>
    <name type="common">Yeast</name>
    <name type="synonym">Ashbya gossypii</name>
    <dbReference type="NCBI Taxonomy" id="284811"/>
    <lineage>
        <taxon>Eukaryota</taxon>
        <taxon>Fungi</taxon>
        <taxon>Dikarya</taxon>
        <taxon>Ascomycota</taxon>
        <taxon>Saccharomycotina</taxon>
        <taxon>Saccharomycetes</taxon>
        <taxon>Saccharomycetales</taxon>
        <taxon>Saccharomycetaceae</taxon>
        <taxon>Eremothecium</taxon>
    </lineage>
</organism>
<dbReference type="EC" id="4.1.1.33" evidence="2"/>
<dbReference type="EMBL" id="AE016820">
    <property type="protein sequence ID" value="AAS54259.2"/>
    <property type="molecule type" value="Genomic_DNA"/>
</dbReference>
<dbReference type="RefSeq" id="NP_986435.2">
    <property type="nucleotide sequence ID" value="NM_211497.2"/>
</dbReference>
<dbReference type="SMR" id="Q751D8"/>
<dbReference type="FunCoup" id="Q751D8">
    <property type="interactions" value="698"/>
</dbReference>
<dbReference type="STRING" id="284811.Q751D8"/>
<dbReference type="EnsemblFungi" id="AAS54259">
    <property type="protein sequence ID" value="AAS54259"/>
    <property type="gene ID" value="AGOS_AGL232C"/>
</dbReference>
<dbReference type="GeneID" id="4622728"/>
<dbReference type="KEGG" id="ago:AGOS_AGL232C"/>
<dbReference type="eggNOG" id="KOG2833">
    <property type="taxonomic scope" value="Eukaryota"/>
</dbReference>
<dbReference type="HOGENOM" id="CLU_040369_4_2_1"/>
<dbReference type="InParanoid" id="Q751D8"/>
<dbReference type="OMA" id="LTLHAMM"/>
<dbReference type="OrthoDB" id="10253702at2759"/>
<dbReference type="UniPathway" id="UPA00057">
    <property type="reaction ID" value="UER00100"/>
</dbReference>
<dbReference type="Proteomes" id="UP000000591">
    <property type="component" value="Chromosome VII"/>
</dbReference>
<dbReference type="GO" id="GO:0005829">
    <property type="term" value="C:cytosol"/>
    <property type="evidence" value="ECO:0000318"/>
    <property type="project" value="GO_Central"/>
</dbReference>
<dbReference type="GO" id="GO:0005524">
    <property type="term" value="F:ATP binding"/>
    <property type="evidence" value="ECO:0007669"/>
    <property type="project" value="UniProtKB-KW"/>
</dbReference>
<dbReference type="GO" id="GO:0004163">
    <property type="term" value="F:diphosphomevalonate decarboxylase activity"/>
    <property type="evidence" value="ECO:0000318"/>
    <property type="project" value="GO_Central"/>
</dbReference>
<dbReference type="GO" id="GO:0019287">
    <property type="term" value="P:isopentenyl diphosphate biosynthetic process, mevalonate pathway"/>
    <property type="evidence" value="ECO:0000318"/>
    <property type="project" value="GO_Central"/>
</dbReference>
<dbReference type="GO" id="GO:0016126">
    <property type="term" value="P:sterol biosynthetic process"/>
    <property type="evidence" value="ECO:0007669"/>
    <property type="project" value="UniProtKB-KW"/>
</dbReference>
<dbReference type="FunFam" id="3.30.230.10:FF:000018">
    <property type="entry name" value="Diphosphomevalonate decarboxylase"/>
    <property type="match status" value="1"/>
</dbReference>
<dbReference type="FunFam" id="3.30.70.890:FF:000005">
    <property type="entry name" value="Diphosphomevalonate decarboxylase"/>
    <property type="match status" value="1"/>
</dbReference>
<dbReference type="Gene3D" id="3.30.230.10">
    <property type="match status" value="1"/>
</dbReference>
<dbReference type="Gene3D" id="3.30.70.890">
    <property type="entry name" value="GHMP kinase, C-terminal domain"/>
    <property type="match status" value="1"/>
</dbReference>
<dbReference type="InterPro" id="IPR036554">
    <property type="entry name" value="GHMP_kinase_C_sf"/>
</dbReference>
<dbReference type="InterPro" id="IPR005935">
    <property type="entry name" value="Mev_decarb"/>
</dbReference>
<dbReference type="InterPro" id="IPR029765">
    <property type="entry name" value="Mev_diP_decarb"/>
</dbReference>
<dbReference type="InterPro" id="IPR053859">
    <property type="entry name" value="MVD-like_N"/>
</dbReference>
<dbReference type="InterPro" id="IPR041431">
    <property type="entry name" value="Mvd1_C"/>
</dbReference>
<dbReference type="InterPro" id="IPR020568">
    <property type="entry name" value="Ribosomal_Su5_D2-typ_SF"/>
</dbReference>
<dbReference type="InterPro" id="IPR014721">
    <property type="entry name" value="Ribsml_uS5_D2-typ_fold_subgr"/>
</dbReference>
<dbReference type="NCBIfam" id="TIGR01240">
    <property type="entry name" value="mevDPdecarb"/>
    <property type="match status" value="1"/>
</dbReference>
<dbReference type="PANTHER" id="PTHR10977">
    <property type="entry name" value="DIPHOSPHOMEVALONATE DECARBOXYLASE"/>
    <property type="match status" value="1"/>
</dbReference>
<dbReference type="PANTHER" id="PTHR10977:SF3">
    <property type="entry name" value="DIPHOSPHOMEVALONATE DECARBOXYLASE"/>
    <property type="match status" value="1"/>
</dbReference>
<dbReference type="Pfam" id="PF18376">
    <property type="entry name" value="MDD_C"/>
    <property type="match status" value="1"/>
</dbReference>
<dbReference type="Pfam" id="PF22700">
    <property type="entry name" value="MVD-like_N"/>
    <property type="match status" value="1"/>
</dbReference>
<dbReference type="PIRSF" id="PIRSF015950">
    <property type="entry name" value="Mev_P_decrbx"/>
    <property type="match status" value="1"/>
</dbReference>
<dbReference type="SUPFAM" id="SSF55060">
    <property type="entry name" value="GHMP Kinase, C-terminal domain"/>
    <property type="match status" value="1"/>
</dbReference>
<dbReference type="SUPFAM" id="SSF54211">
    <property type="entry name" value="Ribosomal protein S5 domain 2-like"/>
    <property type="match status" value="1"/>
</dbReference>
<reference key="1">
    <citation type="journal article" date="2004" name="Science">
        <title>The Ashbya gossypii genome as a tool for mapping the ancient Saccharomyces cerevisiae genome.</title>
        <authorList>
            <person name="Dietrich F.S."/>
            <person name="Voegeli S."/>
            <person name="Brachat S."/>
            <person name="Lerch A."/>
            <person name="Gates K."/>
            <person name="Steiner S."/>
            <person name="Mohr C."/>
            <person name="Poehlmann R."/>
            <person name="Luedi P."/>
            <person name="Choi S."/>
            <person name="Wing R.A."/>
            <person name="Flavier A."/>
            <person name="Gaffney T.D."/>
            <person name="Philippsen P."/>
        </authorList>
    </citation>
    <scope>NUCLEOTIDE SEQUENCE [LARGE SCALE GENOMIC DNA]</scope>
    <source>
        <strain>ATCC 10895 / CBS 109.51 / FGSC 9923 / NRRL Y-1056</strain>
    </source>
</reference>
<reference key="2">
    <citation type="journal article" date="2013" name="G3 (Bethesda)">
        <title>Genomes of Ashbya fungi isolated from insects reveal four mating-type loci, numerous translocations, lack of transposons, and distinct gene duplications.</title>
        <authorList>
            <person name="Dietrich F.S."/>
            <person name="Voegeli S."/>
            <person name="Kuo S."/>
            <person name="Philippsen P."/>
        </authorList>
    </citation>
    <scope>GENOME REANNOTATION</scope>
    <source>
        <strain>ATCC 10895 / CBS 109.51 / FGSC 9923 / NRRL Y-1056</strain>
    </source>
</reference>
<proteinExistence type="inferred from homology"/>
<sequence>MSIYVASTTAPVNIATLKYWGKRDSMLNLPTNSSISVTLSQEDLRTLTSAATGPELAEDRLWLNGKPESLGNARTQQCLADLRALRRALETEEPDLPRMSEWKLHIVSENNFPTAAGLASSAAGFAALVVAVAKLYGLPQDYSEISKIARKGSGSACRSLYGGYVAWEMGAEADGSDSRAVQIADVEHWPEMRAAILVVSADRKDTPSTSGMQQTVHTSDLFKERVATVVPRRYGEMAAAIRARDFATFARLTMQDSNSFHATCLDSFPPIFYMNDTSRRIVKLCHLINEFYNETIVAYTFDAGPNAVLYYLAENEARLCGFLSAVFGANDGWETTFSTEQRATFAAQFDECVRGKLATDLDDELHRGVARLIFTKVGPGPQDTKSSLIDPETGLPR</sequence>
<keyword id="KW-0067">ATP-binding</keyword>
<keyword id="KW-0444">Lipid biosynthesis</keyword>
<keyword id="KW-0443">Lipid metabolism</keyword>
<keyword id="KW-0456">Lyase</keyword>
<keyword id="KW-0547">Nucleotide-binding</keyword>
<keyword id="KW-1185">Reference proteome</keyword>
<keyword id="KW-0752">Steroid biosynthesis</keyword>
<keyword id="KW-0753">Steroid metabolism</keyword>
<keyword id="KW-0756">Sterol biosynthesis</keyword>
<keyword id="KW-1207">Sterol metabolism</keyword>
<gene>
    <name evidence="2" type="primary">MVD1</name>
    <name type="ordered locus">AGL232C</name>
</gene>
<protein>
    <recommendedName>
        <fullName evidence="2">Diphosphomevalonate decarboxylase</fullName>
        <ecNumber evidence="2">4.1.1.33</ecNumber>
    </recommendedName>
    <alternativeName>
        <fullName evidence="2">Ergosterol biosynthesis protein 19</fullName>
    </alternativeName>
    <alternativeName>
        <fullName evidence="2">Mevalonate pyrophosphate decarboxylase</fullName>
        <shortName evidence="2">MPD</shortName>
    </alternativeName>
    <alternativeName>
        <fullName evidence="2">Mevalonate-5-diphosphate decarboxylase</fullName>
        <shortName evidence="2">MDD</shortName>
        <shortName evidence="2">MDDase</shortName>
    </alternativeName>
</protein>
<feature type="chain" id="PRO_0000310439" description="Diphosphomevalonate decarboxylase">
    <location>
        <begin position="1"/>
        <end position="397"/>
    </location>
</feature>
<feature type="region of interest" description="Disordered" evidence="3">
    <location>
        <begin position="378"/>
        <end position="397"/>
    </location>
</feature>
<feature type="binding site" evidence="1">
    <location>
        <begin position="19"/>
        <end position="22"/>
    </location>
    <ligand>
        <name>(R)-5-diphosphomevalonate</name>
        <dbReference type="ChEBI" id="CHEBI:57557"/>
    </ligand>
</feature>
<feature type="binding site" evidence="1">
    <location>
        <position position="74"/>
    </location>
    <ligand>
        <name>(R)-5-diphosphomevalonate</name>
        <dbReference type="ChEBI" id="CHEBI:57557"/>
    </ligand>
</feature>
<feature type="binding site" evidence="1">
    <location>
        <begin position="153"/>
        <end position="158"/>
    </location>
    <ligand>
        <name>(R)-5-diphosphomevalonate</name>
        <dbReference type="ChEBI" id="CHEBI:57557"/>
    </ligand>
</feature>
<feature type="binding site" evidence="1">
    <location>
        <position position="209"/>
    </location>
    <ligand>
        <name>(R)-5-diphosphomevalonate</name>
        <dbReference type="ChEBI" id="CHEBI:57557"/>
    </ligand>
</feature>
<evidence type="ECO:0000250" key="1">
    <source>
        <dbReference type="UniProtKB" id="O23722"/>
    </source>
</evidence>
<evidence type="ECO:0000250" key="2">
    <source>
        <dbReference type="UniProtKB" id="P32377"/>
    </source>
</evidence>
<evidence type="ECO:0000256" key="3">
    <source>
        <dbReference type="SAM" id="MobiDB-lite"/>
    </source>
</evidence>
<evidence type="ECO:0000305" key="4"/>
<name>MVD1_EREGS</name>